<reference key="1">
    <citation type="submission" date="2008-02" db="EMBL/GenBank/DDBJ databases">
        <title>Complete sequence of Escherichia coli C str. ATCC 8739.</title>
        <authorList>
            <person name="Copeland A."/>
            <person name="Lucas S."/>
            <person name="Lapidus A."/>
            <person name="Glavina del Rio T."/>
            <person name="Dalin E."/>
            <person name="Tice H."/>
            <person name="Bruce D."/>
            <person name="Goodwin L."/>
            <person name="Pitluck S."/>
            <person name="Kiss H."/>
            <person name="Brettin T."/>
            <person name="Detter J.C."/>
            <person name="Han C."/>
            <person name="Kuske C.R."/>
            <person name="Schmutz J."/>
            <person name="Larimer F."/>
            <person name="Land M."/>
            <person name="Hauser L."/>
            <person name="Kyrpides N."/>
            <person name="Mikhailova N."/>
            <person name="Ingram L."/>
            <person name="Richardson P."/>
        </authorList>
    </citation>
    <scope>NUCLEOTIDE SEQUENCE [LARGE SCALE GENOMIC DNA]</scope>
    <source>
        <strain>ATCC 8739 / DSM 1576 / NBRC 3972 / NCIMB 8545 / WDCM 00012 / Crooks</strain>
    </source>
</reference>
<keyword id="KW-0067">ATP-binding</keyword>
<keyword id="KW-0418">Kinase</keyword>
<keyword id="KW-0441">Lipid A biosynthesis</keyword>
<keyword id="KW-0444">Lipid biosynthesis</keyword>
<keyword id="KW-0443">Lipid metabolism</keyword>
<keyword id="KW-0547">Nucleotide-binding</keyword>
<keyword id="KW-0808">Transferase</keyword>
<gene>
    <name evidence="1" type="primary">lpxK</name>
    <name type="ordered locus">EcolC_2681</name>
</gene>
<organism>
    <name type="scientific">Escherichia coli (strain ATCC 8739 / DSM 1576 / NBRC 3972 / NCIMB 8545 / WDCM 00012 / Crooks)</name>
    <dbReference type="NCBI Taxonomy" id="481805"/>
    <lineage>
        <taxon>Bacteria</taxon>
        <taxon>Pseudomonadati</taxon>
        <taxon>Pseudomonadota</taxon>
        <taxon>Gammaproteobacteria</taxon>
        <taxon>Enterobacterales</taxon>
        <taxon>Enterobacteriaceae</taxon>
        <taxon>Escherichia</taxon>
    </lineage>
</organism>
<name>LPXK_ECOLC</name>
<accession>B1IW16</accession>
<comment type="function">
    <text evidence="1">Transfers the gamma-phosphate of ATP to the 4'-position of a tetraacyldisaccharide 1-phosphate intermediate (termed DS-1-P) to form tetraacyldisaccharide 1,4'-bis-phosphate (lipid IVA).</text>
</comment>
<comment type="catalytic activity">
    <reaction evidence="1">
        <text>a lipid A disaccharide + ATP = a lipid IVA + ADP + H(+)</text>
        <dbReference type="Rhea" id="RHEA:67840"/>
        <dbReference type="ChEBI" id="CHEBI:15378"/>
        <dbReference type="ChEBI" id="CHEBI:30616"/>
        <dbReference type="ChEBI" id="CHEBI:176343"/>
        <dbReference type="ChEBI" id="CHEBI:176425"/>
        <dbReference type="ChEBI" id="CHEBI:456216"/>
        <dbReference type="EC" id="2.7.1.130"/>
    </reaction>
</comment>
<comment type="pathway">
    <text evidence="1">Glycolipid biosynthesis; lipid IV(A) biosynthesis; lipid IV(A) from (3R)-3-hydroxytetradecanoyl-[acyl-carrier-protein] and UDP-N-acetyl-alpha-D-glucosamine: step 6/6.</text>
</comment>
<comment type="similarity">
    <text evidence="1">Belongs to the LpxK family.</text>
</comment>
<proteinExistence type="inferred from homology"/>
<protein>
    <recommendedName>
        <fullName evidence="1">Tetraacyldisaccharide 4'-kinase</fullName>
        <ecNumber evidence="1">2.7.1.130</ecNumber>
    </recommendedName>
    <alternativeName>
        <fullName evidence="1">Lipid A 4'-kinase</fullName>
    </alternativeName>
</protein>
<dbReference type="EC" id="2.7.1.130" evidence="1"/>
<dbReference type="EMBL" id="CP000946">
    <property type="protein sequence ID" value="ACA78310.1"/>
    <property type="molecule type" value="Genomic_DNA"/>
</dbReference>
<dbReference type="RefSeq" id="WP_000570540.1">
    <property type="nucleotide sequence ID" value="NZ_MTFT01000009.1"/>
</dbReference>
<dbReference type="SMR" id="B1IW16"/>
<dbReference type="GeneID" id="93776500"/>
<dbReference type="KEGG" id="ecl:EcolC_2681"/>
<dbReference type="HOGENOM" id="CLU_038816_2_0_6"/>
<dbReference type="UniPathway" id="UPA00359">
    <property type="reaction ID" value="UER00482"/>
</dbReference>
<dbReference type="GO" id="GO:0005886">
    <property type="term" value="C:plasma membrane"/>
    <property type="evidence" value="ECO:0007669"/>
    <property type="project" value="TreeGrafter"/>
</dbReference>
<dbReference type="GO" id="GO:0005524">
    <property type="term" value="F:ATP binding"/>
    <property type="evidence" value="ECO:0007669"/>
    <property type="project" value="UniProtKB-UniRule"/>
</dbReference>
<dbReference type="GO" id="GO:0009029">
    <property type="term" value="F:tetraacyldisaccharide 4'-kinase activity"/>
    <property type="evidence" value="ECO:0007669"/>
    <property type="project" value="UniProtKB-UniRule"/>
</dbReference>
<dbReference type="GO" id="GO:0009245">
    <property type="term" value="P:lipid A biosynthetic process"/>
    <property type="evidence" value="ECO:0007669"/>
    <property type="project" value="UniProtKB-UniRule"/>
</dbReference>
<dbReference type="GO" id="GO:0009244">
    <property type="term" value="P:lipopolysaccharide core region biosynthetic process"/>
    <property type="evidence" value="ECO:0007669"/>
    <property type="project" value="TreeGrafter"/>
</dbReference>
<dbReference type="HAMAP" id="MF_00409">
    <property type="entry name" value="LpxK"/>
    <property type="match status" value="1"/>
</dbReference>
<dbReference type="InterPro" id="IPR003758">
    <property type="entry name" value="LpxK"/>
</dbReference>
<dbReference type="InterPro" id="IPR027417">
    <property type="entry name" value="P-loop_NTPase"/>
</dbReference>
<dbReference type="NCBIfam" id="TIGR00682">
    <property type="entry name" value="lpxK"/>
    <property type="match status" value="1"/>
</dbReference>
<dbReference type="PANTHER" id="PTHR42724">
    <property type="entry name" value="TETRAACYLDISACCHARIDE 4'-KINASE"/>
    <property type="match status" value="1"/>
</dbReference>
<dbReference type="PANTHER" id="PTHR42724:SF1">
    <property type="entry name" value="TETRAACYLDISACCHARIDE 4'-KINASE, MITOCHONDRIAL-RELATED"/>
    <property type="match status" value="1"/>
</dbReference>
<dbReference type="Pfam" id="PF02606">
    <property type="entry name" value="LpxK"/>
    <property type="match status" value="1"/>
</dbReference>
<dbReference type="SUPFAM" id="SSF52540">
    <property type="entry name" value="P-loop containing nucleoside triphosphate hydrolases"/>
    <property type="match status" value="1"/>
</dbReference>
<sequence>MIEKIWSGESPLWRLLLPLSWLYGLVSGAIRLCYKLKLKRAWRAPVPVVVVGNLTAGGNGKTPVVVWLVEQLQQRGIRVGVVSRGYGGKAESYPLLLSADTTTAQAGDEPVLIYQRTDAPVAVSPVRSDAVKAILAQHPDVQIIVTDDGLQHYRLARDVEIVVIDGVRRFGNGWWLPAGPMRERAGRLKSVDAVIVNGGVPRSGEIPMHLLPGQAVNLRTGTRCDVAQLEHVVAMAGIGHPPRFFATLKMCGVQPEKCVPLADHQSLNHADVSALVSAGQTLVMTEKDAVKCRAFAEENWWYLPVDAQLSGDEPAKLLTQLTSLASGN</sequence>
<feature type="chain" id="PRO_1000123710" description="Tetraacyldisaccharide 4'-kinase">
    <location>
        <begin position="1"/>
        <end position="328"/>
    </location>
</feature>
<feature type="binding site" evidence="1">
    <location>
        <begin position="55"/>
        <end position="62"/>
    </location>
    <ligand>
        <name>ATP</name>
        <dbReference type="ChEBI" id="CHEBI:30616"/>
    </ligand>
</feature>
<evidence type="ECO:0000255" key="1">
    <source>
        <dbReference type="HAMAP-Rule" id="MF_00409"/>
    </source>
</evidence>